<evidence type="ECO:0000255" key="1">
    <source>
        <dbReference type="HAMAP-Rule" id="MF_00016"/>
    </source>
</evidence>
<feature type="chain" id="PRO_1000089689" description="Holliday junction branch migration complex subunit RuvB">
    <location>
        <begin position="1"/>
        <end position="338"/>
    </location>
</feature>
<feature type="region of interest" description="Large ATPase domain (RuvB-L)" evidence="1">
    <location>
        <begin position="1"/>
        <end position="181"/>
    </location>
</feature>
<feature type="region of interest" description="Small ATPAse domain (RuvB-S)" evidence="1">
    <location>
        <begin position="182"/>
        <end position="252"/>
    </location>
</feature>
<feature type="region of interest" description="Head domain (RuvB-H)" evidence="1">
    <location>
        <begin position="255"/>
        <end position="338"/>
    </location>
</feature>
<feature type="binding site" evidence="1">
    <location>
        <position position="20"/>
    </location>
    <ligand>
        <name>ATP</name>
        <dbReference type="ChEBI" id="CHEBI:30616"/>
    </ligand>
</feature>
<feature type="binding site" evidence="1">
    <location>
        <position position="21"/>
    </location>
    <ligand>
        <name>ATP</name>
        <dbReference type="ChEBI" id="CHEBI:30616"/>
    </ligand>
</feature>
<feature type="binding site" evidence="1">
    <location>
        <position position="62"/>
    </location>
    <ligand>
        <name>ATP</name>
        <dbReference type="ChEBI" id="CHEBI:30616"/>
    </ligand>
</feature>
<feature type="binding site" evidence="1">
    <location>
        <position position="65"/>
    </location>
    <ligand>
        <name>ATP</name>
        <dbReference type="ChEBI" id="CHEBI:30616"/>
    </ligand>
</feature>
<feature type="binding site" evidence="1">
    <location>
        <position position="66"/>
    </location>
    <ligand>
        <name>ATP</name>
        <dbReference type="ChEBI" id="CHEBI:30616"/>
    </ligand>
</feature>
<feature type="binding site" evidence="1">
    <location>
        <position position="66"/>
    </location>
    <ligand>
        <name>Mg(2+)</name>
        <dbReference type="ChEBI" id="CHEBI:18420"/>
    </ligand>
</feature>
<feature type="binding site" evidence="1">
    <location>
        <position position="67"/>
    </location>
    <ligand>
        <name>ATP</name>
        <dbReference type="ChEBI" id="CHEBI:30616"/>
    </ligand>
</feature>
<feature type="binding site" evidence="1">
    <location>
        <begin position="128"/>
        <end position="130"/>
    </location>
    <ligand>
        <name>ATP</name>
        <dbReference type="ChEBI" id="CHEBI:30616"/>
    </ligand>
</feature>
<feature type="binding site" evidence="1">
    <location>
        <position position="171"/>
    </location>
    <ligand>
        <name>ATP</name>
        <dbReference type="ChEBI" id="CHEBI:30616"/>
    </ligand>
</feature>
<feature type="binding site" evidence="1">
    <location>
        <position position="181"/>
    </location>
    <ligand>
        <name>ATP</name>
        <dbReference type="ChEBI" id="CHEBI:30616"/>
    </ligand>
</feature>
<feature type="binding site" evidence="1">
    <location>
        <position position="218"/>
    </location>
    <ligand>
        <name>ATP</name>
        <dbReference type="ChEBI" id="CHEBI:30616"/>
    </ligand>
</feature>
<feature type="binding site" evidence="1">
    <location>
        <position position="310"/>
    </location>
    <ligand>
        <name>DNA</name>
        <dbReference type="ChEBI" id="CHEBI:16991"/>
    </ligand>
</feature>
<feature type="binding site" evidence="1">
    <location>
        <position position="315"/>
    </location>
    <ligand>
        <name>DNA</name>
        <dbReference type="ChEBI" id="CHEBI:16991"/>
    </ligand>
</feature>
<gene>
    <name evidence="1" type="primary">ruvB</name>
    <name type="ordered locus">Teth514_1454</name>
</gene>
<comment type="function">
    <text evidence="1">The RuvA-RuvB-RuvC complex processes Holliday junction (HJ) DNA during genetic recombination and DNA repair, while the RuvA-RuvB complex plays an important role in the rescue of blocked DNA replication forks via replication fork reversal (RFR). RuvA specifically binds to HJ cruciform DNA, conferring on it an open structure. The RuvB hexamer acts as an ATP-dependent pump, pulling dsDNA into and through the RuvAB complex. RuvB forms 2 homohexamers on either side of HJ DNA bound by 1 or 2 RuvA tetramers; 4 subunits per hexamer contact DNA at a time. Coordinated motions by a converter formed by DNA-disengaged RuvB subunits stimulates ATP hydrolysis and nucleotide exchange. Immobilization of the converter enables RuvB to convert the ATP-contained energy into a lever motion, pulling 2 nucleotides of DNA out of the RuvA tetramer per ATP hydrolyzed, thus driving DNA branch migration. The RuvB motors rotate together with the DNA substrate, which together with the progressing nucleotide cycle form the mechanistic basis for DNA recombination by continuous HJ branch migration. Branch migration allows RuvC to scan DNA until it finds its consensus sequence, where it cleaves and resolves cruciform DNA.</text>
</comment>
<comment type="catalytic activity">
    <reaction evidence="1">
        <text>ATP + H2O = ADP + phosphate + H(+)</text>
        <dbReference type="Rhea" id="RHEA:13065"/>
        <dbReference type="ChEBI" id="CHEBI:15377"/>
        <dbReference type="ChEBI" id="CHEBI:15378"/>
        <dbReference type="ChEBI" id="CHEBI:30616"/>
        <dbReference type="ChEBI" id="CHEBI:43474"/>
        <dbReference type="ChEBI" id="CHEBI:456216"/>
    </reaction>
</comment>
<comment type="subunit">
    <text evidence="1">Homohexamer. Forms an RuvA(8)-RuvB(12)-Holliday junction (HJ) complex. HJ DNA is sandwiched between 2 RuvA tetramers; dsDNA enters through RuvA and exits via RuvB. An RuvB hexamer assembles on each DNA strand where it exits the tetramer. Each RuvB hexamer is contacted by two RuvA subunits (via domain III) on 2 adjacent RuvB subunits; this complex drives branch migration. In the full resolvosome a probable DNA-RuvA(4)-RuvB(12)-RuvC(2) complex forms which resolves the HJ.</text>
</comment>
<comment type="subcellular location">
    <subcellularLocation>
        <location evidence="1">Cytoplasm</location>
    </subcellularLocation>
</comment>
<comment type="domain">
    <text evidence="1">Has 3 domains, the large (RuvB-L) and small ATPase (RuvB-S) domains and the C-terminal head (RuvB-H) domain. The head domain binds DNA, while the ATPase domains jointly bind ATP, ADP or are empty depending on the state of the subunit in the translocation cycle. During a single DNA translocation step the structure of each domain remains the same, but their relative positions change.</text>
</comment>
<comment type="similarity">
    <text evidence="1">Belongs to the RuvB family.</text>
</comment>
<organism>
    <name type="scientific">Thermoanaerobacter sp. (strain X514)</name>
    <dbReference type="NCBI Taxonomy" id="399726"/>
    <lineage>
        <taxon>Bacteria</taxon>
        <taxon>Bacillati</taxon>
        <taxon>Bacillota</taxon>
        <taxon>Clostridia</taxon>
        <taxon>Thermoanaerobacterales</taxon>
        <taxon>Thermoanaerobacteraceae</taxon>
        <taxon>Thermoanaerobacter</taxon>
    </lineage>
</organism>
<name>RUVB_THEPX</name>
<dbReference type="EC" id="3.6.4.-" evidence="1"/>
<dbReference type="EMBL" id="CP000923">
    <property type="protein sequence ID" value="ABY92743.1"/>
    <property type="molecule type" value="Genomic_DNA"/>
</dbReference>
<dbReference type="RefSeq" id="WP_003868519.1">
    <property type="nucleotide sequence ID" value="NC_010320.1"/>
</dbReference>
<dbReference type="SMR" id="B0K0L8"/>
<dbReference type="KEGG" id="tex:Teth514_1454"/>
<dbReference type="HOGENOM" id="CLU_055599_1_0_9"/>
<dbReference type="Proteomes" id="UP000002155">
    <property type="component" value="Chromosome"/>
</dbReference>
<dbReference type="GO" id="GO:0005737">
    <property type="term" value="C:cytoplasm"/>
    <property type="evidence" value="ECO:0007669"/>
    <property type="project" value="UniProtKB-SubCell"/>
</dbReference>
<dbReference type="GO" id="GO:0048476">
    <property type="term" value="C:Holliday junction resolvase complex"/>
    <property type="evidence" value="ECO:0007669"/>
    <property type="project" value="UniProtKB-UniRule"/>
</dbReference>
<dbReference type="GO" id="GO:0005524">
    <property type="term" value="F:ATP binding"/>
    <property type="evidence" value="ECO:0007669"/>
    <property type="project" value="UniProtKB-UniRule"/>
</dbReference>
<dbReference type="GO" id="GO:0016887">
    <property type="term" value="F:ATP hydrolysis activity"/>
    <property type="evidence" value="ECO:0007669"/>
    <property type="project" value="InterPro"/>
</dbReference>
<dbReference type="GO" id="GO:0000400">
    <property type="term" value="F:four-way junction DNA binding"/>
    <property type="evidence" value="ECO:0007669"/>
    <property type="project" value="UniProtKB-UniRule"/>
</dbReference>
<dbReference type="GO" id="GO:0009378">
    <property type="term" value="F:four-way junction helicase activity"/>
    <property type="evidence" value="ECO:0007669"/>
    <property type="project" value="InterPro"/>
</dbReference>
<dbReference type="GO" id="GO:0006310">
    <property type="term" value="P:DNA recombination"/>
    <property type="evidence" value="ECO:0007669"/>
    <property type="project" value="UniProtKB-UniRule"/>
</dbReference>
<dbReference type="GO" id="GO:0006281">
    <property type="term" value="P:DNA repair"/>
    <property type="evidence" value="ECO:0007669"/>
    <property type="project" value="UniProtKB-UniRule"/>
</dbReference>
<dbReference type="CDD" id="cd00009">
    <property type="entry name" value="AAA"/>
    <property type="match status" value="1"/>
</dbReference>
<dbReference type="Gene3D" id="1.10.8.60">
    <property type="match status" value="1"/>
</dbReference>
<dbReference type="Gene3D" id="3.40.50.300">
    <property type="entry name" value="P-loop containing nucleotide triphosphate hydrolases"/>
    <property type="match status" value="1"/>
</dbReference>
<dbReference type="Gene3D" id="1.10.10.10">
    <property type="entry name" value="Winged helix-like DNA-binding domain superfamily/Winged helix DNA-binding domain"/>
    <property type="match status" value="1"/>
</dbReference>
<dbReference type="HAMAP" id="MF_00016">
    <property type="entry name" value="DNA_HJ_migration_RuvB"/>
    <property type="match status" value="1"/>
</dbReference>
<dbReference type="InterPro" id="IPR003593">
    <property type="entry name" value="AAA+_ATPase"/>
</dbReference>
<dbReference type="InterPro" id="IPR041445">
    <property type="entry name" value="AAA_lid_4"/>
</dbReference>
<dbReference type="InterPro" id="IPR004605">
    <property type="entry name" value="DNA_helicase_Holl-junc_RuvB"/>
</dbReference>
<dbReference type="InterPro" id="IPR027417">
    <property type="entry name" value="P-loop_NTPase"/>
</dbReference>
<dbReference type="InterPro" id="IPR008824">
    <property type="entry name" value="RuvB-like_N"/>
</dbReference>
<dbReference type="InterPro" id="IPR008823">
    <property type="entry name" value="RuvB_C"/>
</dbReference>
<dbReference type="InterPro" id="IPR036388">
    <property type="entry name" value="WH-like_DNA-bd_sf"/>
</dbReference>
<dbReference type="InterPro" id="IPR036390">
    <property type="entry name" value="WH_DNA-bd_sf"/>
</dbReference>
<dbReference type="NCBIfam" id="NF000868">
    <property type="entry name" value="PRK00080.1"/>
    <property type="match status" value="1"/>
</dbReference>
<dbReference type="NCBIfam" id="TIGR00635">
    <property type="entry name" value="ruvB"/>
    <property type="match status" value="1"/>
</dbReference>
<dbReference type="PANTHER" id="PTHR42848">
    <property type="match status" value="1"/>
</dbReference>
<dbReference type="PANTHER" id="PTHR42848:SF1">
    <property type="entry name" value="HOLLIDAY JUNCTION BRANCH MIGRATION COMPLEX SUBUNIT RUVB"/>
    <property type="match status" value="1"/>
</dbReference>
<dbReference type="Pfam" id="PF17864">
    <property type="entry name" value="AAA_lid_4"/>
    <property type="match status" value="1"/>
</dbReference>
<dbReference type="Pfam" id="PF05491">
    <property type="entry name" value="RuvB_C"/>
    <property type="match status" value="1"/>
</dbReference>
<dbReference type="Pfam" id="PF05496">
    <property type="entry name" value="RuvB_N"/>
    <property type="match status" value="1"/>
</dbReference>
<dbReference type="SMART" id="SM00382">
    <property type="entry name" value="AAA"/>
    <property type="match status" value="1"/>
</dbReference>
<dbReference type="SUPFAM" id="SSF52540">
    <property type="entry name" value="P-loop containing nucleoside triphosphate hydrolases"/>
    <property type="match status" value="1"/>
</dbReference>
<dbReference type="SUPFAM" id="SSF46785">
    <property type="entry name" value="Winged helix' DNA-binding domain"/>
    <property type="match status" value="1"/>
</dbReference>
<reference key="1">
    <citation type="submission" date="2008-01" db="EMBL/GenBank/DDBJ databases">
        <title>Complete sequence of Thermoanaerobacter sp. X514.</title>
        <authorList>
            <consortium name="US DOE Joint Genome Institute"/>
            <person name="Copeland A."/>
            <person name="Lucas S."/>
            <person name="Lapidus A."/>
            <person name="Barry K."/>
            <person name="Glavina del Rio T."/>
            <person name="Dalin E."/>
            <person name="Tice H."/>
            <person name="Pitluck S."/>
            <person name="Bruce D."/>
            <person name="Goodwin L."/>
            <person name="Saunders E."/>
            <person name="Brettin T."/>
            <person name="Detter J.C."/>
            <person name="Han C."/>
            <person name="Schmutz J."/>
            <person name="Larimer F."/>
            <person name="Land M."/>
            <person name="Hauser L."/>
            <person name="Kyrpides N."/>
            <person name="Kim E."/>
            <person name="Hemme C."/>
            <person name="Fields M.W."/>
            <person name="He Z."/>
            <person name="Zhou J."/>
            <person name="Richardson P."/>
        </authorList>
    </citation>
    <scope>NUCLEOTIDE SEQUENCE [LARGE SCALE GENOMIC DNA]</scope>
    <source>
        <strain>X514</strain>
    </source>
</reference>
<proteinExistence type="inferred from homology"/>
<keyword id="KW-0067">ATP-binding</keyword>
<keyword id="KW-0963">Cytoplasm</keyword>
<keyword id="KW-0227">DNA damage</keyword>
<keyword id="KW-0233">DNA recombination</keyword>
<keyword id="KW-0234">DNA repair</keyword>
<keyword id="KW-0238">DNA-binding</keyword>
<keyword id="KW-0378">Hydrolase</keyword>
<keyword id="KW-0547">Nucleotide-binding</keyword>
<sequence>MEERILTQNFTQEDASEYSLRPRWLSEYIGQQKIKEELKIYIEAAKMRKEPLDHVLLYGPPGLGKTTLATVISNEMGVGIKITSGPAIEKSGDLAAILTNLQENDILFIDEIHRLNRSVEEILYPAMEDFELDIVIGKGPSARSIRLSLPRFTLIGATTRAALMTSPLRDRFGVINRLDYYSVEELKEIIKRSANILNIGIDEKAALEIAKRSRGTPRIANRLLKRVRDFAQVRGNGYIDFKTSKEALDVLGVDEIGLEYIDRKILVSIIEKFGGGPVGIDAIAASIGEDGDTIEDVYEPYLLQIGFLNRTPRGRVVTKLAYDYLKYPYIEQGRIEGV</sequence>
<protein>
    <recommendedName>
        <fullName evidence="1">Holliday junction branch migration complex subunit RuvB</fullName>
        <ecNumber evidence="1">3.6.4.-</ecNumber>
    </recommendedName>
</protein>
<accession>B0K0L8</accession>